<protein>
    <recommendedName>
        <fullName evidence="4">Pollen allergen Phl p 5.0101</fullName>
    </recommendedName>
    <alternativeName>
        <fullName evidence="4">Allergen Phl p 5a</fullName>
    </alternativeName>
    <alternativeName>
        <fullName evidence="4">Allergen Phl p V</fullName>
    </alternativeName>
    <allergenName evidence="4">Phl p 5.0101</allergenName>
</protein>
<reference key="1">
    <citation type="journal article" date="1993" name="J. Immunol.">
        <title>cDNA cloning of a major allergen from timothy grass (Phleum pratense) pollen; characterization of the recombinant Phl pV allergen.</title>
        <authorList>
            <person name="Vrtala S."/>
            <person name="Sperr W.R."/>
            <person name="Reimitzer I."/>
            <person name="van Ree R."/>
            <person name="Laffer S."/>
            <person name="Mueller W.D."/>
            <person name="Valent P."/>
            <person name="Lechner K."/>
            <person name="Rumpold H."/>
            <person name="Kraft D."/>
            <person name="Scheiner O."/>
            <person name="Valenta R."/>
        </authorList>
    </citation>
    <scope>NUCLEOTIDE SEQUENCE [GENOMIC DNA]</scope>
    <scope>ALLERGEN</scope>
</reference>
<reference key="2">
    <citation type="journal article" date="2017" name="J. Allergy Clin. Immunol.">
        <title>Flexible IgE epitope-containing domains of Phl p 5 cause high allergenic activity.</title>
        <authorList>
            <person name="Gobl C."/>
            <person name="Focke-Tejkl M."/>
            <person name="Najafi N."/>
            <person name="Schrank E."/>
            <person name="Madl T."/>
            <person name="Kosol S."/>
            <person name="Madritsch C."/>
            <person name="Dorofeeva Y."/>
            <person name="Flicker S."/>
            <person name="Thalhamer J."/>
            <person name="Valenta R."/>
            <person name="Zangger K."/>
            <person name="Tjandra N."/>
        </authorList>
    </citation>
    <scope>STRUCTURE BY NMR OF 55-285</scope>
    <scope>ALLERGEN</scope>
</reference>
<dbReference type="EMBL" id="X74735">
    <property type="protein sequence ID" value="CAA52753.1"/>
    <property type="molecule type" value="Genomic_DNA"/>
</dbReference>
<dbReference type="PIR" id="S37400">
    <property type="entry name" value="S37400"/>
</dbReference>
<dbReference type="PDB" id="2M64">
    <property type="method" value="NMR"/>
    <property type="chains" value="A=55-285"/>
</dbReference>
<dbReference type="PDBsum" id="2M64"/>
<dbReference type="SMR" id="Q40960"/>
<dbReference type="Allergome" id="558">
    <property type="allergen name" value="Phl p 5"/>
</dbReference>
<dbReference type="Allergome" id="559">
    <property type="allergen name" value="Phl p 5.0101"/>
</dbReference>
<dbReference type="ABCD" id="Q40960">
    <property type="antibodies" value="24 sequenced antibodies"/>
</dbReference>
<dbReference type="EvolutionaryTrace" id="Q40960"/>
<dbReference type="GO" id="GO:0005576">
    <property type="term" value="C:extracellular region"/>
    <property type="evidence" value="ECO:0007669"/>
    <property type="project" value="UniProtKB-SubCell"/>
</dbReference>
<dbReference type="CDD" id="cd12805">
    <property type="entry name" value="Allergen_V_VI"/>
    <property type="match status" value="1"/>
</dbReference>
<dbReference type="Gene3D" id="1.20.120.320">
    <property type="entry name" value="Group V grass pollen allergen"/>
    <property type="match status" value="2"/>
</dbReference>
<dbReference type="InterPro" id="IPR002914">
    <property type="entry name" value="Poa_pIX/Phl_pVI"/>
</dbReference>
<dbReference type="InterPro" id="IPR035506">
    <property type="entry name" value="Pollen_allergen/Os"/>
</dbReference>
<dbReference type="Pfam" id="PF01620">
    <property type="entry name" value="Pollen_allerg_2"/>
    <property type="match status" value="2"/>
</dbReference>
<dbReference type="PRINTS" id="PR00833">
    <property type="entry name" value="POAALLERGEN"/>
</dbReference>
<dbReference type="SUPFAM" id="SSF81736">
    <property type="entry name" value="Group V grass pollen allergen"/>
    <property type="match status" value="2"/>
</dbReference>
<feature type="signal peptide" evidence="1">
    <location>
        <begin position="1"/>
        <end position="25"/>
    </location>
</feature>
<feature type="chain" id="PRO_5004231642" description="Pollen allergen Phl p 5.0101">
    <location>
        <begin position="26"/>
        <end position="312"/>
    </location>
</feature>
<feature type="helix" evidence="5">
    <location>
        <begin position="62"/>
        <end position="66"/>
    </location>
</feature>
<feature type="turn" evidence="5">
    <location>
        <begin position="67"/>
        <end position="69"/>
    </location>
</feature>
<feature type="helix" evidence="5">
    <location>
        <begin position="70"/>
        <end position="81"/>
    </location>
</feature>
<feature type="strand" evidence="5">
    <location>
        <begin position="82"/>
        <end position="84"/>
    </location>
</feature>
<feature type="strand" evidence="5">
    <location>
        <begin position="86"/>
        <end position="88"/>
    </location>
</feature>
<feature type="helix" evidence="5">
    <location>
        <begin position="89"/>
        <end position="107"/>
    </location>
</feature>
<feature type="helix" evidence="5">
    <location>
        <begin position="120"/>
        <end position="142"/>
    </location>
</feature>
<feature type="helix" evidence="5">
    <location>
        <begin position="148"/>
        <end position="166"/>
    </location>
</feature>
<feature type="helix" evidence="5">
    <location>
        <begin position="190"/>
        <end position="205"/>
    </location>
</feature>
<feature type="strand" evidence="5">
    <location>
        <begin position="207"/>
        <end position="211"/>
    </location>
</feature>
<feature type="helix" evidence="5">
    <location>
        <begin position="212"/>
        <end position="227"/>
    </location>
</feature>
<feature type="turn" evidence="5">
    <location>
        <begin position="228"/>
        <end position="230"/>
    </location>
</feature>
<feature type="helix" evidence="5">
    <location>
        <begin position="241"/>
        <end position="251"/>
    </location>
</feature>
<feature type="helix" evidence="5">
    <location>
        <begin position="260"/>
        <end position="280"/>
    </location>
</feature>
<comment type="subcellular location">
    <subcellularLocation>
        <location evidence="4">Secreted</location>
    </subcellularLocation>
</comment>
<comment type="allergen">
    <text evidence="2 3">Causes an allergic reaction in human. Causes grass pollen allergy. Binds to IgE of patients who are allergic to P.pratense.</text>
</comment>
<comment type="similarity">
    <text evidence="4">Belongs to the Poa p IX/Phl p VI allergen family.</text>
</comment>
<keyword id="KW-0002">3D-structure</keyword>
<keyword id="KW-0020">Allergen</keyword>
<keyword id="KW-0964">Secreted</keyword>
<keyword id="KW-0732">Signal</keyword>
<accession>Q40960</accession>
<proteinExistence type="evidence at protein level"/>
<organism>
    <name type="scientific">Phleum pratense</name>
    <name type="common">Common timothy</name>
    <dbReference type="NCBI Taxonomy" id="15957"/>
    <lineage>
        <taxon>Eukaryota</taxon>
        <taxon>Viridiplantae</taxon>
        <taxon>Streptophyta</taxon>
        <taxon>Embryophyta</taxon>
        <taxon>Tracheophyta</taxon>
        <taxon>Spermatophyta</taxon>
        <taxon>Magnoliopsida</taxon>
        <taxon>Liliopsida</taxon>
        <taxon>Poales</taxon>
        <taxon>Poaceae</taxon>
        <taxon>BOP clade</taxon>
        <taxon>Pooideae</taxon>
        <taxon>Poodae</taxon>
        <taxon>Poeae</taxon>
        <taxon>Poeae Chloroplast Group 2 (Poeae type)</taxon>
        <taxon>Poodinae</taxon>
        <taxon>Phleinae</taxon>
        <taxon>Phleum</taxon>
    </lineage>
</organism>
<sequence>MAVHQYTVALFLAVALVAGPAASYAADLGYGPATPAAPAAGYTPATPAAPAEAAPAGKATTEEQKLIEKINAGFKAALAAAAGVQPADKYRTFVATFGAASNKAFAEGLSGEPKGAAESSSKAALTSKLDAAYKLAYKTAEGATPEAKYDAYVATLSEALRIIAGTLEVHAVKPAAEEVKVIPAGELQVIEKVDAAFKVAATAANAAPANDKFTVFEAAFNDAIKASTGGAYESYKFIPALEAAVKQAYAATVATAPEVKYTVFETALKKAITAMSEAQKAAKPAAAATATATAAVGAATGAATAATGGYKV</sequence>
<evidence type="ECO:0000255" key="1"/>
<evidence type="ECO:0000269" key="2">
    <source>
    </source>
</evidence>
<evidence type="ECO:0000269" key="3">
    <source>
    </source>
</evidence>
<evidence type="ECO:0000305" key="4"/>
<evidence type="ECO:0007829" key="5">
    <source>
        <dbReference type="PDB" id="2M64"/>
    </source>
</evidence>
<name>MPAP5_PHLPR</name>